<organism>
    <name type="scientific">Streptococcus equi subsp. equi (strain 4047)</name>
    <dbReference type="NCBI Taxonomy" id="553482"/>
    <lineage>
        <taxon>Bacteria</taxon>
        <taxon>Bacillati</taxon>
        <taxon>Bacillota</taxon>
        <taxon>Bacilli</taxon>
        <taxon>Lactobacillales</taxon>
        <taxon>Streptococcaceae</taxon>
        <taxon>Streptococcus</taxon>
    </lineage>
</organism>
<reference key="1">
    <citation type="journal article" date="2009" name="PLoS Pathog.">
        <title>Genomic evidence for the evolution of Streptococcus equi: host restriction, increased virulence, and genetic exchange with human pathogens.</title>
        <authorList>
            <person name="Holden M.T.G."/>
            <person name="Heather Z."/>
            <person name="Paillot R."/>
            <person name="Steward K.F."/>
            <person name="Webb K."/>
            <person name="Ainslie F."/>
            <person name="Jourdan T."/>
            <person name="Bason N.C."/>
            <person name="Holroyd N.E."/>
            <person name="Mungall K."/>
            <person name="Quail M.A."/>
            <person name="Sanders M."/>
            <person name="Simmonds M."/>
            <person name="Willey D."/>
            <person name="Brooks K."/>
            <person name="Aanensen D.M."/>
            <person name="Spratt B.G."/>
            <person name="Jolley K.A."/>
            <person name="Maiden M.C.J."/>
            <person name="Kehoe M."/>
            <person name="Chanter N."/>
            <person name="Bentley S.D."/>
            <person name="Robinson C."/>
            <person name="Maskell D.J."/>
            <person name="Parkhill J."/>
            <person name="Waller A.S."/>
        </authorList>
    </citation>
    <scope>NUCLEOTIDE SEQUENCE [LARGE SCALE GENOMIC DNA]</scope>
    <source>
        <strain>4047</strain>
    </source>
</reference>
<gene>
    <name evidence="1" type="primary">tmk</name>
    <name type="ordered locus">SEQ_1829</name>
</gene>
<keyword id="KW-0067">ATP-binding</keyword>
<keyword id="KW-0418">Kinase</keyword>
<keyword id="KW-0545">Nucleotide biosynthesis</keyword>
<keyword id="KW-0547">Nucleotide-binding</keyword>
<keyword id="KW-0808">Transferase</keyword>
<name>KTHY_STRE4</name>
<feature type="chain" id="PRO_1000123589" description="Thymidylate kinase">
    <location>
        <begin position="1"/>
        <end position="211"/>
    </location>
</feature>
<feature type="binding site" evidence="1">
    <location>
        <begin position="11"/>
        <end position="18"/>
    </location>
    <ligand>
        <name>ATP</name>
        <dbReference type="ChEBI" id="CHEBI:30616"/>
    </ligand>
</feature>
<dbReference type="EC" id="2.7.4.9" evidence="1"/>
<dbReference type="EMBL" id="FM204883">
    <property type="protein sequence ID" value="CAW94978.1"/>
    <property type="molecule type" value="Genomic_DNA"/>
</dbReference>
<dbReference type="RefSeq" id="WP_012680032.1">
    <property type="nucleotide sequence ID" value="NC_012471.1"/>
</dbReference>
<dbReference type="SMR" id="C0M7M5"/>
<dbReference type="KEGG" id="seu:SEQ_1829"/>
<dbReference type="HOGENOM" id="CLU_049131_0_2_9"/>
<dbReference type="OrthoDB" id="9774907at2"/>
<dbReference type="Proteomes" id="UP000001365">
    <property type="component" value="Chromosome"/>
</dbReference>
<dbReference type="GO" id="GO:0005829">
    <property type="term" value="C:cytosol"/>
    <property type="evidence" value="ECO:0007669"/>
    <property type="project" value="TreeGrafter"/>
</dbReference>
<dbReference type="GO" id="GO:0005524">
    <property type="term" value="F:ATP binding"/>
    <property type="evidence" value="ECO:0007669"/>
    <property type="project" value="UniProtKB-UniRule"/>
</dbReference>
<dbReference type="GO" id="GO:0004798">
    <property type="term" value="F:dTMP kinase activity"/>
    <property type="evidence" value="ECO:0007669"/>
    <property type="project" value="UniProtKB-UniRule"/>
</dbReference>
<dbReference type="GO" id="GO:0006233">
    <property type="term" value="P:dTDP biosynthetic process"/>
    <property type="evidence" value="ECO:0007669"/>
    <property type="project" value="InterPro"/>
</dbReference>
<dbReference type="GO" id="GO:0006235">
    <property type="term" value="P:dTTP biosynthetic process"/>
    <property type="evidence" value="ECO:0007669"/>
    <property type="project" value="UniProtKB-UniRule"/>
</dbReference>
<dbReference type="GO" id="GO:0006227">
    <property type="term" value="P:dUDP biosynthetic process"/>
    <property type="evidence" value="ECO:0007669"/>
    <property type="project" value="TreeGrafter"/>
</dbReference>
<dbReference type="CDD" id="cd01672">
    <property type="entry name" value="TMPK"/>
    <property type="match status" value="1"/>
</dbReference>
<dbReference type="FunFam" id="3.40.50.300:FF:000225">
    <property type="entry name" value="Thymidylate kinase"/>
    <property type="match status" value="1"/>
</dbReference>
<dbReference type="Gene3D" id="3.40.50.300">
    <property type="entry name" value="P-loop containing nucleotide triphosphate hydrolases"/>
    <property type="match status" value="1"/>
</dbReference>
<dbReference type="HAMAP" id="MF_00165">
    <property type="entry name" value="Thymidylate_kinase"/>
    <property type="match status" value="1"/>
</dbReference>
<dbReference type="InterPro" id="IPR027417">
    <property type="entry name" value="P-loop_NTPase"/>
</dbReference>
<dbReference type="InterPro" id="IPR039430">
    <property type="entry name" value="Thymidylate_kin-like_dom"/>
</dbReference>
<dbReference type="InterPro" id="IPR018095">
    <property type="entry name" value="Thymidylate_kin_CS"/>
</dbReference>
<dbReference type="InterPro" id="IPR018094">
    <property type="entry name" value="Thymidylate_kinase"/>
</dbReference>
<dbReference type="NCBIfam" id="TIGR00041">
    <property type="entry name" value="DTMP_kinase"/>
    <property type="match status" value="1"/>
</dbReference>
<dbReference type="PANTHER" id="PTHR10344">
    <property type="entry name" value="THYMIDYLATE KINASE"/>
    <property type="match status" value="1"/>
</dbReference>
<dbReference type="PANTHER" id="PTHR10344:SF4">
    <property type="entry name" value="UMP-CMP KINASE 2, MITOCHONDRIAL"/>
    <property type="match status" value="1"/>
</dbReference>
<dbReference type="Pfam" id="PF02223">
    <property type="entry name" value="Thymidylate_kin"/>
    <property type="match status" value="1"/>
</dbReference>
<dbReference type="SUPFAM" id="SSF52540">
    <property type="entry name" value="P-loop containing nucleoside triphosphate hydrolases"/>
    <property type="match status" value="1"/>
</dbReference>
<dbReference type="PROSITE" id="PS01331">
    <property type="entry name" value="THYMIDYLATE_KINASE"/>
    <property type="match status" value="1"/>
</dbReference>
<evidence type="ECO:0000255" key="1">
    <source>
        <dbReference type="HAMAP-Rule" id="MF_00165"/>
    </source>
</evidence>
<accession>C0M7M5</accession>
<protein>
    <recommendedName>
        <fullName evidence="1">Thymidylate kinase</fullName>
        <ecNumber evidence="1">2.7.4.9</ecNumber>
    </recommendedName>
    <alternativeName>
        <fullName evidence="1">dTMP kinase</fullName>
    </alternativeName>
</protein>
<sequence length="211" mass="23280">MTRGKLITFEGPDGAGKTTVLERLVPLLQAALGQTIVTTREPGGVAIAEKIRQLILDVSHTTMDDKTELLLYIAARRQHLVEKIMPALESGHLVLVDRFIDSSVAYQGAGRGLDKQAIQWLNHFATDGVDPDLTLYFDVPSELGLARIAQNTEREINRLDLEQLDLHQRVRKGYLELALENPQRIVKIDASQDLESVVSAALAAIITHSQA</sequence>
<comment type="function">
    <text evidence="1">Phosphorylation of dTMP to form dTDP in both de novo and salvage pathways of dTTP synthesis.</text>
</comment>
<comment type="catalytic activity">
    <reaction evidence="1">
        <text>dTMP + ATP = dTDP + ADP</text>
        <dbReference type="Rhea" id="RHEA:13517"/>
        <dbReference type="ChEBI" id="CHEBI:30616"/>
        <dbReference type="ChEBI" id="CHEBI:58369"/>
        <dbReference type="ChEBI" id="CHEBI:63528"/>
        <dbReference type="ChEBI" id="CHEBI:456216"/>
        <dbReference type="EC" id="2.7.4.9"/>
    </reaction>
</comment>
<comment type="similarity">
    <text evidence="1">Belongs to the thymidylate kinase family.</text>
</comment>
<proteinExistence type="inferred from homology"/>